<protein>
    <recommendedName>
        <fullName evidence="1">Protease HtpX homolog</fullName>
        <ecNumber evidence="1">3.4.24.-</ecNumber>
    </recommendedName>
</protein>
<accession>A3N4D7</accession>
<evidence type="ECO:0000255" key="1">
    <source>
        <dbReference type="HAMAP-Rule" id="MF_00188"/>
    </source>
</evidence>
<proteinExistence type="inferred from homology"/>
<sequence>MFNWVKTAMLMAAITALFIVIGGMIGGSRGMTIALLIALGMNFFSYWFSDKMVLRMYNAQEVDEATAPQFYRMVRELATRANLPMPRVYLIDENQPNAFATGRNPEHAAVAATTGILRVLSEREMRGVMAHELAHVKHRDILISTISATMAGAISALANFAMFFGGRDENGRPANPIAGIAVALLAPIAGALIQMAISRAREFEADRGGAQISGDPQALASALDKIHRYASGIPFQTAEEHPATAQMMIMNPLSGGGLQNLFSTHPATEERIARLMDMARTGRFD</sequence>
<comment type="cofactor">
    <cofactor evidence="1">
        <name>Zn(2+)</name>
        <dbReference type="ChEBI" id="CHEBI:29105"/>
    </cofactor>
    <text evidence="1">Binds 1 zinc ion per subunit.</text>
</comment>
<comment type="subcellular location">
    <subcellularLocation>
        <location evidence="1">Cell inner membrane</location>
        <topology evidence="1">Multi-pass membrane protein</topology>
    </subcellularLocation>
</comment>
<comment type="similarity">
    <text evidence="1">Belongs to the peptidase M48B family.</text>
</comment>
<organism>
    <name type="scientific">Burkholderia pseudomallei (strain 668)</name>
    <dbReference type="NCBI Taxonomy" id="320373"/>
    <lineage>
        <taxon>Bacteria</taxon>
        <taxon>Pseudomonadati</taxon>
        <taxon>Pseudomonadota</taxon>
        <taxon>Betaproteobacteria</taxon>
        <taxon>Burkholderiales</taxon>
        <taxon>Burkholderiaceae</taxon>
        <taxon>Burkholderia</taxon>
        <taxon>pseudomallei group</taxon>
    </lineage>
</organism>
<reference key="1">
    <citation type="journal article" date="2010" name="Genome Biol. Evol.">
        <title>Continuing evolution of Burkholderia mallei through genome reduction and large-scale rearrangements.</title>
        <authorList>
            <person name="Losada L."/>
            <person name="Ronning C.M."/>
            <person name="DeShazer D."/>
            <person name="Woods D."/>
            <person name="Fedorova N."/>
            <person name="Kim H.S."/>
            <person name="Shabalina S.A."/>
            <person name="Pearson T.R."/>
            <person name="Brinkac L."/>
            <person name="Tan P."/>
            <person name="Nandi T."/>
            <person name="Crabtree J."/>
            <person name="Badger J."/>
            <person name="Beckstrom-Sternberg S."/>
            <person name="Saqib M."/>
            <person name="Schutzer S.E."/>
            <person name="Keim P."/>
            <person name="Nierman W.C."/>
        </authorList>
    </citation>
    <scope>NUCLEOTIDE SEQUENCE [LARGE SCALE GENOMIC DNA]</scope>
    <source>
        <strain>668</strain>
    </source>
</reference>
<gene>
    <name evidence="1" type="primary">htpX</name>
    <name type="ordered locus">BURPS668_0154</name>
</gene>
<keyword id="KW-0997">Cell inner membrane</keyword>
<keyword id="KW-1003">Cell membrane</keyword>
<keyword id="KW-0378">Hydrolase</keyword>
<keyword id="KW-0472">Membrane</keyword>
<keyword id="KW-0479">Metal-binding</keyword>
<keyword id="KW-0482">Metalloprotease</keyword>
<keyword id="KW-0645">Protease</keyword>
<keyword id="KW-0812">Transmembrane</keyword>
<keyword id="KW-1133">Transmembrane helix</keyword>
<keyword id="KW-0862">Zinc</keyword>
<dbReference type="EC" id="3.4.24.-" evidence="1"/>
<dbReference type="EMBL" id="CP000570">
    <property type="protein sequence ID" value="ABN84047.1"/>
    <property type="molecule type" value="Genomic_DNA"/>
</dbReference>
<dbReference type="RefSeq" id="WP_004189409.1">
    <property type="nucleotide sequence ID" value="NC_009074.1"/>
</dbReference>
<dbReference type="GeneID" id="93058627"/>
<dbReference type="KEGG" id="bpd:BURPS668_0154"/>
<dbReference type="HOGENOM" id="CLU_042266_3_0_4"/>
<dbReference type="GO" id="GO:0005886">
    <property type="term" value="C:plasma membrane"/>
    <property type="evidence" value="ECO:0007669"/>
    <property type="project" value="UniProtKB-SubCell"/>
</dbReference>
<dbReference type="GO" id="GO:0004222">
    <property type="term" value="F:metalloendopeptidase activity"/>
    <property type="evidence" value="ECO:0007669"/>
    <property type="project" value="UniProtKB-UniRule"/>
</dbReference>
<dbReference type="GO" id="GO:0008270">
    <property type="term" value="F:zinc ion binding"/>
    <property type="evidence" value="ECO:0007669"/>
    <property type="project" value="UniProtKB-UniRule"/>
</dbReference>
<dbReference type="GO" id="GO:0006508">
    <property type="term" value="P:proteolysis"/>
    <property type="evidence" value="ECO:0007669"/>
    <property type="project" value="UniProtKB-KW"/>
</dbReference>
<dbReference type="CDD" id="cd07336">
    <property type="entry name" value="M48B_HtpX_like"/>
    <property type="match status" value="1"/>
</dbReference>
<dbReference type="Gene3D" id="3.30.2010.10">
    <property type="entry name" value="Metalloproteases ('zincins'), catalytic domain"/>
    <property type="match status" value="1"/>
</dbReference>
<dbReference type="HAMAP" id="MF_00188">
    <property type="entry name" value="Pept_M48_protease_HtpX"/>
    <property type="match status" value="1"/>
</dbReference>
<dbReference type="InterPro" id="IPR050083">
    <property type="entry name" value="HtpX_protease"/>
</dbReference>
<dbReference type="InterPro" id="IPR022919">
    <property type="entry name" value="Pept_M48_protease_HtpX"/>
</dbReference>
<dbReference type="InterPro" id="IPR001915">
    <property type="entry name" value="Peptidase_M48"/>
</dbReference>
<dbReference type="NCBIfam" id="NF002363">
    <property type="entry name" value="PRK01345.1"/>
    <property type="match status" value="1"/>
</dbReference>
<dbReference type="NCBIfam" id="NF002826">
    <property type="entry name" value="PRK03001.1"/>
    <property type="match status" value="1"/>
</dbReference>
<dbReference type="PANTHER" id="PTHR43221">
    <property type="entry name" value="PROTEASE HTPX"/>
    <property type="match status" value="1"/>
</dbReference>
<dbReference type="PANTHER" id="PTHR43221:SF1">
    <property type="entry name" value="PROTEASE HTPX"/>
    <property type="match status" value="1"/>
</dbReference>
<dbReference type="Pfam" id="PF01435">
    <property type="entry name" value="Peptidase_M48"/>
    <property type="match status" value="1"/>
</dbReference>
<feature type="chain" id="PRO_1000077457" description="Protease HtpX homolog">
    <location>
        <begin position="1"/>
        <end position="285"/>
    </location>
</feature>
<feature type="transmembrane region" description="Helical" evidence="1">
    <location>
        <begin position="7"/>
        <end position="27"/>
    </location>
</feature>
<feature type="transmembrane region" description="Helical" evidence="1">
    <location>
        <begin position="30"/>
        <end position="50"/>
    </location>
</feature>
<feature type="transmembrane region" description="Helical" evidence="1">
    <location>
        <begin position="146"/>
        <end position="166"/>
    </location>
</feature>
<feature type="transmembrane region" description="Helical" evidence="1">
    <location>
        <begin position="177"/>
        <end position="197"/>
    </location>
</feature>
<feature type="active site" evidence="1">
    <location>
        <position position="132"/>
    </location>
</feature>
<feature type="binding site" evidence="1">
    <location>
        <position position="131"/>
    </location>
    <ligand>
        <name>Zn(2+)</name>
        <dbReference type="ChEBI" id="CHEBI:29105"/>
        <note>catalytic</note>
    </ligand>
</feature>
<feature type="binding site" evidence="1">
    <location>
        <position position="135"/>
    </location>
    <ligand>
        <name>Zn(2+)</name>
        <dbReference type="ChEBI" id="CHEBI:29105"/>
        <note>catalytic</note>
    </ligand>
</feature>
<feature type="binding site" evidence="1">
    <location>
        <position position="202"/>
    </location>
    <ligand>
        <name>Zn(2+)</name>
        <dbReference type="ChEBI" id="CHEBI:29105"/>
        <note>catalytic</note>
    </ligand>
</feature>
<name>HTPX_BURP6</name>